<protein>
    <recommendedName>
        <fullName evidence="1">Cyclic pyranopterin monophosphate synthase</fullName>
        <ecNumber evidence="1">4.6.1.17</ecNumber>
    </recommendedName>
    <alternativeName>
        <fullName evidence="1">Molybdenum cofactor biosynthesis protein C</fullName>
    </alternativeName>
</protein>
<accession>Q8Y1X7</accession>
<keyword id="KW-0456">Lyase</keyword>
<keyword id="KW-0501">Molybdenum cofactor biosynthesis</keyword>
<keyword id="KW-1185">Reference proteome</keyword>
<sequence length="158" mass="16956">MPHLTHFDTAGQAHMVDVGDKAVTHRVAVATGLIHMLPTTFALVRDGTAKKGDVLGIARIAAIQGAKRTSDLIPLCHPLALTKVAVDFELDEADRTVRCTVRAETHGQTGVEMEALTAVQVGLLTIYDMCKAVDRGMVIGDVRLMEKRGGKSGEWVAQ</sequence>
<organism>
    <name type="scientific">Ralstonia nicotianae (strain ATCC BAA-1114 / GMI1000)</name>
    <name type="common">Ralstonia solanacearum</name>
    <dbReference type="NCBI Taxonomy" id="267608"/>
    <lineage>
        <taxon>Bacteria</taxon>
        <taxon>Pseudomonadati</taxon>
        <taxon>Pseudomonadota</taxon>
        <taxon>Betaproteobacteria</taxon>
        <taxon>Burkholderiales</taxon>
        <taxon>Burkholderiaceae</taxon>
        <taxon>Ralstonia</taxon>
        <taxon>Ralstonia solanacearum species complex</taxon>
    </lineage>
</organism>
<proteinExistence type="inferred from homology"/>
<evidence type="ECO:0000255" key="1">
    <source>
        <dbReference type="HAMAP-Rule" id="MF_01224"/>
    </source>
</evidence>
<comment type="function">
    <text evidence="1">Catalyzes the conversion of (8S)-3',8-cyclo-7,8-dihydroguanosine 5'-triphosphate to cyclic pyranopterin monophosphate (cPMP).</text>
</comment>
<comment type="catalytic activity">
    <reaction evidence="1">
        <text>(8S)-3',8-cyclo-7,8-dihydroguanosine 5'-triphosphate = cyclic pyranopterin phosphate + diphosphate</text>
        <dbReference type="Rhea" id="RHEA:49580"/>
        <dbReference type="ChEBI" id="CHEBI:33019"/>
        <dbReference type="ChEBI" id="CHEBI:59648"/>
        <dbReference type="ChEBI" id="CHEBI:131766"/>
        <dbReference type="EC" id="4.6.1.17"/>
    </reaction>
</comment>
<comment type="pathway">
    <text evidence="1">Cofactor biosynthesis; molybdopterin biosynthesis.</text>
</comment>
<comment type="subunit">
    <text evidence="1">Homohexamer; trimer of dimers.</text>
</comment>
<comment type="similarity">
    <text evidence="1">Belongs to the MoaC family.</text>
</comment>
<reference key="1">
    <citation type="journal article" date="2002" name="Nature">
        <title>Genome sequence of the plant pathogen Ralstonia solanacearum.</title>
        <authorList>
            <person name="Salanoubat M."/>
            <person name="Genin S."/>
            <person name="Artiguenave F."/>
            <person name="Gouzy J."/>
            <person name="Mangenot S."/>
            <person name="Arlat M."/>
            <person name="Billault A."/>
            <person name="Brottier P."/>
            <person name="Camus J.-C."/>
            <person name="Cattolico L."/>
            <person name="Chandler M."/>
            <person name="Choisne N."/>
            <person name="Claudel-Renard C."/>
            <person name="Cunnac S."/>
            <person name="Demange N."/>
            <person name="Gaspin C."/>
            <person name="Lavie M."/>
            <person name="Moisan A."/>
            <person name="Robert C."/>
            <person name="Saurin W."/>
            <person name="Schiex T."/>
            <person name="Siguier P."/>
            <person name="Thebault P."/>
            <person name="Whalen M."/>
            <person name="Wincker P."/>
            <person name="Levy M."/>
            <person name="Weissenbach J."/>
            <person name="Boucher C.A."/>
        </authorList>
    </citation>
    <scope>NUCLEOTIDE SEQUENCE [LARGE SCALE GENOMIC DNA]</scope>
    <source>
        <strain>ATCC BAA-1114 / GMI1000</strain>
    </source>
</reference>
<feature type="chain" id="PRO_0000097820" description="Cyclic pyranopterin monophosphate synthase">
    <location>
        <begin position="1"/>
        <end position="158"/>
    </location>
</feature>
<feature type="active site" evidence="1">
    <location>
        <position position="128"/>
    </location>
</feature>
<feature type="binding site" evidence="1">
    <location>
        <begin position="75"/>
        <end position="77"/>
    </location>
    <ligand>
        <name>substrate</name>
    </ligand>
</feature>
<feature type="binding site" evidence="1">
    <location>
        <begin position="113"/>
        <end position="114"/>
    </location>
    <ligand>
        <name>substrate</name>
    </ligand>
</feature>
<name>MOAC_RALN1</name>
<gene>
    <name evidence="1" type="primary">moaC</name>
    <name type="ordered locus">RSc0560</name>
    <name type="ORF">RS04905</name>
</gene>
<dbReference type="EC" id="4.6.1.17" evidence="1"/>
<dbReference type="EMBL" id="AL646052">
    <property type="protein sequence ID" value="CAD14090.1"/>
    <property type="molecule type" value="Genomic_DNA"/>
</dbReference>
<dbReference type="RefSeq" id="WP_011000519.1">
    <property type="nucleotide sequence ID" value="NC_003295.1"/>
</dbReference>
<dbReference type="SMR" id="Q8Y1X7"/>
<dbReference type="STRING" id="267608.RSc0560"/>
<dbReference type="EnsemblBacteria" id="CAD14090">
    <property type="protein sequence ID" value="CAD14090"/>
    <property type="gene ID" value="RSc0560"/>
</dbReference>
<dbReference type="KEGG" id="rso:RSc0560"/>
<dbReference type="eggNOG" id="COG0315">
    <property type="taxonomic scope" value="Bacteria"/>
</dbReference>
<dbReference type="HOGENOM" id="CLU_074693_1_1_4"/>
<dbReference type="UniPathway" id="UPA00344"/>
<dbReference type="Proteomes" id="UP000001436">
    <property type="component" value="Chromosome"/>
</dbReference>
<dbReference type="GO" id="GO:0061799">
    <property type="term" value="F:cyclic pyranopterin monophosphate synthase activity"/>
    <property type="evidence" value="ECO:0007669"/>
    <property type="project" value="UniProtKB-UniRule"/>
</dbReference>
<dbReference type="GO" id="GO:0006777">
    <property type="term" value="P:Mo-molybdopterin cofactor biosynthetic process"/>
    <property type="evidence" value="ECO:0007669"/>
    <property type="project" value="UniProtKB-UniRule"/>
</dbReference>
<dbReference type="CDD" id="cd01420">
    <property type="entry name" value="MoaC_PE"/>
    <property type="match status" value="1"/>
</dbReference>
<dbReference type="Gene3D" id="3.30.70.640">
    <property type="entry name" value="Molybdopterin cofactor biosynthesis C (MoaC) domain"/>
    <property type="match status" value="1"/>
</dbReference>
<dbReference type="HAMAP" id="MF_01224_B">
    <property type="entry name" value="MoaC_B"/>
    <property type="match status" value="1"/>
</dbReference>
<dbReference type="InterPro" id="IPR023045">
    <property type="entry name" value="MoaC"/>
</dbReference>
<dbReference type="InterPro" id="IPR047594">
    <property type="entry name" value="MoaC_bact/euk"/>
</dbReference>
<dbReference type="InterPro" id="IPR036522">
    <property type="entry name" value="MoaC_sf"/>
</dbReference>
<dbReference type="InterPro" id="IPR050105">
    <property type="entry name" value="MoCo_biosynth_MoaA/MoaC"/>
</dbReference>
<dbReference type="InterPro" id="IPR002820">
    <property type="entry name" value="Mopterin_CF_biosynth-C_dom"/>
</dbReference>
<dbReference type="NCBIfam" id="TIGR00581">
    <property type="entry name" value="moaC"/>
    <property type="match status" value="1"/>
</dbReference>
<dbReference type="NCBIfam" id="NF006870">
    <property type="entry name" value="PRK09364.1"/>
    <property type="match status" value="1"/>
</dbReference>
<dbReference type="PANTHER" id="PTHR22960:SF29">
    <property type="entry name" value="CYCLIC PYRANOPTERIN MONOPHOSPHATE SYNTHASE"/>
    <property type="match status" value="1"/>
</dbReference>
<dbReference type="PANTHER" id="PTHR22960">
    <property type="entry name" value="MOLYBDOPTERIN COFACTOR SYNTHESIS PROTEIN A"/>
    <property type="match status" value="1"/>
</dbReference>
<dbReference type="Pfam" id="PF01967">
    <property type="entry name" value="MoaC"/>
    <property type="match status" value="1"/>
</dbReference>
<dbReference type="SUPFAM" id="SSF55040">
    <property type="entry name" value="Molybdenum cofactor biosynthesis protein C, MoaC"/>
    <property type="match status" value="1"/>
</dbReference>